<keyword id="KW-0997">Cell inner membrane</keyword>
<keyword id="KW-1003">Cell membrane</keyword>
<keyword id="KW-0169">Cobalamin biosynthesis</keyword>
<keyword id="KW-0460">Magnesium</keyword>
<keyword id="KW-0472">Membrane</keyword>
<keyword id="KW-0808">Transferase</keyword>
<keyword id="KW-0812">Transmembrane</keyword>
<keyword id="KW-1133">Transmembrane helix</keyword>
<evidence type="ECO:0000255" key="1">
    <source>
        <dbReference type="HAMAP-Rule" id="MF_00719"/>
    </source>
</evidence>
<comment type="function">
    <text evidence="1">Joins adenosylcobinamide-GDP and alpha-ribazole to generate adenosylcobalamin (Ado-cobalamin). Also synthesizes adenosylcobalamin 5'-phosphate from adenosylcobinamide-GDP and alpha-ribazole 5'-phosphate.</text>
</comment>
<comment type="catalytic activity">
    <reaction evidence="1">
        <text>alpha-ribazole + adenosylcob(III)inamide-GDP = adenosylcob(III)alamin + GMP + H(+)</text>
        <dbReference type="Rhea" id="RHEA:16049"/>
        <dbReference type="ChEBI" id="CHEBI:10329"/>
        <dbReference type="ChEBI" id="CHEBI:15378"/>
        <dbReference type="ChEBI" id="CHEBI:18408"/>
        <dbReference type="ChEBI" id="CHEBI:58115"/>
        <dbReference type="ChEBI" id="CHEBI:60487"/>
        <dbReference type="EC" id="2.7.8.26"/>
    </reaction>
</comment>
<comment type="catalytic activity">
    <reaction evidence="1">
        <text>alpha-ribazole 5'-phosphate + adenosylcob(III)inamide-GDP = adenosylcob(III)alamin 5'-phosphate + GMP + H(+)</text>
        <dbReference type="Rhea" id="RHEA:23560"/>
        <dbReference type="ChEBI" id="CHEBI:15378"/>
        <dbReference type="ChEBI" id="CHEBI:57918"/>
        <dbReference type="ChEBI" id="CHEBI:58115"/>
        <dbReference type="ChEBI" id="CHEBI:60487"/>
        <dbReference type="ChEBI" id="CHEBI:60493"/>
        <dbReference type="EC" id="2.7.8.26"/>
    </reaction>
</comment>
<comment type="cofactor">
    <cofactor evidence="1">
        <name>Mg(2+)</name>
        <dbReference type="ChEBI" id="CHEBI:18420"/>
    </cofactor>
</comment>
<comment type="pathway">
    <text evidence="1">Cofactor biosynthesis; adenosylcobalamin biosynthesis; adenosylcobalamin from cob(II)yrinate a,c-diamide: step 7/7.</text>
</comment>
<comment type="subcellular location">
    <subcellularLocation>
        <location evidence="1">Cell inner membrane</location>
        <topology evidence="1">Multi-pass membrane protein</topology>
    </subcellularLocation>
</comment>
<comment type="similarity">
    <text evidence="1">Belongs to the CobS family.</text>
</comment>
<sequence length="262" mass="28674">MSERESWHKEIDLFLVAMGYFTRIPMPKWVEVDADKLNKASRYFGLVGLLVGLLSAIVFWLTQNWLPAGVSVLLSMVTGVLLTGGFHEDGLADTFDGFGGGWTAEDKLRIMKDSRLGSYGALALMLVLMLKWQLLVELALYDPVVAGSAMIVAHTVSRVVAASLIFTEKYVRDDESSKSKPLAQHQGINELFILIASGVLVLLVLKGIAALSLLLVMIGLRRLIVVIFRRQIGGYTGDTLGAAQQICEIVCYFVLLVVGSIL</sequence>
<organism>
    <name type="scientific">Shewanella sp. (strain MR-7)</name>
    <dbReference type="NCBI Taxonomy" id="60481"/>
    <lineage>
        <taxon>Bacteria</taxon>
        <taxon>Pseudomonadati</taxon>
        <taxon>Pseudomonadota</taxon>
        <taxon>Gammaproteobacteria</taxon>
        <taxon>Alteromonadales</taxon>
        <taxon>Shewanellaceae</taxon>
        <taxon>Shewanella</taxon>
    </lineage>
</organism>
<gene>
    <name evidence="1" type="primary">cobS</name>
    <name type="ordered locus">Shewmr7_3179</name>
</gene>
<feature type="chain" id="PRO_1000045809" description="Adenosylcobinamide-GDP ribazoletransferase">
    <location>
        <begin position="1"/>
        <end position="262"/>
    </location>
</feature>
<feature type="transmembrane region" description="Helical" evidence="1">
    <location>
        <begin position="43"/>
        <end position="63"/>
    </location>
</feature>
<feature type="transmembrane region" description="Helical" evidence="1">
    <location>
        <begin position="66"/>
        <end position="86"/>
    </location>
</feature>
<feature type="transmembrane region" description="Helical" evidence="1">
    <location>
        <begin position="120"/>
        <end position="140"/>
    </location>
</feature>
<feature type="transmembrane region" description="Helical" evidence="1">
    <location>
        <begin position="146"/>
        <end position="166"/>
    </location>
</feature>
<feature type="transmembrane region" description="Helical" evidence="1">
    <location>
        <begin position="191"/>
        <end position="211"/>
    </location>
</feature>
<feature type="transmembrane region" description="Helical" evidence="1">
    <location>
        <begin position="242"/>
        <end position="262"/>
    </location>
</feature>
<reference key="1">
    <citation type="submission" date="2006-08" db="EMBL/GenBank/DDBJ databases">
        <title>Complete sequence of chromosome 1 of Shewanella sp. MR-7.</title>
        <authorList>
            <person name="Copeland A."/>
            <person name="Lucas S."/>
            <person name="Lapidus A."/>
            <person name="Barry K."/>
            <person name="Detter J.C."/>
            <person name="Glavina del Rio T."/>
            <person name="Hammon N."/>
            <person name="Israni S."/>
            <person name="Dalin E."/>
            <person name="Tice H."/>
            <person name="Pitluck S."/>
            <person name="Kiss H."/>
            <person name="Brettin T."/>
            <person name="Bruce D."/>
            <person name="Han C."/>
            <person name="Tapia R."/>
            <person name="Gilna P."/>
            <person name="Schmutz J."/>
            <person name="Larimer F."/>
            <person name="Land M."/>
            <person name="Hauser L."/>
            <person name="Kyrpides N."/>
            <person name="Mikhailova N."/>
            <person name="Nealson K."/>
            <person name="Konstantinidis K."/>
            <person name="Klappenbach J."/>
            <person name="Tiedje J."/>
            <person name="Richardson P."/>
        </authorList>
    </citation>
    <scope>NUCLEOTIDE SEQUENCE [LARGE SCALE GENOMIC DNA]</scope>
    <source>
        <strain>MR-7</strain>
    </source>
</reference>
<accession>Q0HRU2</accession>
<name>COBS_SHESR</name>
<protein>
    <recommendedName>
        <fullName evidence="1">Adenosylcobinamide-GDP ribazoletransferase</fullName>
        <ecNumber evidence="1">2.7.8.26</ecNumber>
    </recommendedName>
    <alternativeName>
        <fullName evidence="1">Cobalamin synthase</fullName>
    </alternativeName>
    <alternativeName>
        <fullName evidence="1">Cobalamin-5'-phosphate synthase</fullName>
    </alternativeName>
</protein>
<proteinExistence type="inferred from homology"/>
<dbReference type="EC" id="2.7.8.26" evidence="1"/>
<dbReference type="EMBL" id="CP000444">
    <property type="protein sequence ID" value="ABI44163.1"/>
    <property type="molecule type" value="Genomic_DNA"/>
</dbReference>
<dbReference type="KEGG" id="shm:Shewmr7_3179"/>
<dbReference type="HOGENOM" id="CLU_057426_1_1_6"/>
<dbReference type="UniPathway" id="UPA00148">
    <property type="reaction ID" value="UER00238"/>
</dbReference>
<dbReference type="GO" id="GO:0005886">
    <property type="term" value="C:plasma membrane"/>
    <property type="evidence" value="ECO:0007669"/>
    <property type="project" value="UniProtKB-SubCell"/>
</dbReference>
<dbReference type="GO" id="GO:0051073">
    <property type="term" value="F:adenosylcobinamide-GDP ribazoletransferase activity"/>
    <property type="evidence" value="ECO:0007669"/>
    <property type="project" value="UniProtKB-UniRule"/>
</dbReference>
<dbReference type="GO" id="GO:0008818">
    <property type="term" value="F:cobalamin 5'-phosphate synthase activity"/>
    <property type="evidence" value="ECO:0007669"/>
    <property type="project" value="UniProtKB-UniRule"/>
</dbReference>
<dbReference type="GO" id="GO:0009236">
    <property type="term" value="P:cobalamin biosynthetic process"/>
    <property type="evidence" value="ECO:0007669"/>
    <property type="project" value="UniProtKB-UniRule"/>
</dbReference>
<dbReference type="HAMAP" id="MF_00719">
    <property type="entry name" value="CobS"/>
    <property type="match status" value="1"/>
</dbReference>
<dbReference type="InterPro" id="IPR003805">
    <property type="entry name" value="CobS"/>
</dbReference>
<dbReference type="NCBIfam" id="TIGR00317">
    <property type="entry name" value="cobS"/>
    <property type="match status" value="1"/>
</dbReference>
<dbReference type="NCBIfam" id="NF001277">
    <property type="entry name" value="PRK00235.1-3"/>
    <property type="match status" value="1"/>
</dbReference>
<dbReference type="PANTHER" id="PTHR34148">
    <property type="entry name" value="ADENOSYLCOBINAMIDE-GDP RIBAZOLETRANSFERASE"/>
    <property type="match status" value="1"/>
</dbReference>
<dbReference type="PANTHER" id="PTHR34148:SF1">
    <property type="entry name" value="ADENOSYLCOBINAMIDE-GDP RIBAZOLETRANSFERASE"/>
    <property type="match status" value="1"/>
</dbReference>
<dbReference type="Pfam" id="PF02654">
    <property type="entry name" value="CobS"/>
    <property type="match status" value="1"/>
</dbReference>